<feature type="chain" id="PRO_1000020305" description="1-deoxy-D-xylulose 5-phosphate reductoisomerase">
    <location>
        <begin position="1"/>
        <end position="392"/>
    </location>
</feature>
<feature type="binding site" evidence="1">
    <location>
        <position position="10"/>
    </location>
    <ligand>
        <name>NADPH</name>
        <dbReference type="ChEBI" id="CHEBI:57783"/>
    </ligand>
</feature>
<feature type="binding site" evidence="1">
    <location>
        <position position="11"/>
    </location>
    <ligand>
        <name>NADPH</name>
        <dbReference type="ChEBI" id="CHEBI:57783"/>
    </ligand>
</feature>
<feature type="binding site" evidence="1">
    <location>
        <position position="12"/>
    </location>
    <ligand>
        <name>NADPH</name>
        <dbReference type="ChEBI" id="CHEBI:57783"/>
    </ligand>
</feature>
<feature type="binding site" evidence="1">
    <location>
        <position position="13"/>
    </location>
    <ligand>
        <name>NADPH</name>
        <dbReference type="ChEBI" id="CHEBI:57783"/>
    </ligand>
</feature>
<feature type="binding site" evidence="1">
    <location>
        <position position="124"/>
    </location>
    <ligand>
        <name>NADPH</name>
        <dbReference type="ChEBI" id="CHEBI:57783"/>
    </ligand>
</feature>
<feature type="binding site" evidence="1">
    <location>
        <position position="125"/>
    </location>
    <ligand>
        <name>1-deoxy-D-xylulose 5-phosphate</name>
        <dbReference type="ChEBI" id="CHEBI:57792"/>
    </ligand>
</feature>
<feature type="binding site" evidence="1">
    <location>
        <position position="126"/>
    </location>
    <ligand>
        <name>NADPH</name>
        <dbReference type="ChEBI" id="CHEBI:57783"/>
    </ligand>
</feature>
<feature type="binding site" evidence="1">
    <location>
        <position position="150"/>
    </location>
    <ligand>
        <name>Mn(2+)</name>
        <dbReference type="ChEBI" id="CHEBI:29035"/>
    </ligand>
</feature>
<feature type="binding site" evidence="1">
    <location>
        <position position="151"/>
    </location>
    <ligand>
        <name>1-deoxy-D-xylulose 5-phosphate</name>
        <dbReference type="ChEBI" id="CHEBI:57792"/>
    </ligand>
</feature>
<feature type="binding site" evidence="1">
    <location>
        <position position="152"/>
    </location>
    <ligand>
        <name>1-deoxy-D-xylulose 5-phosphate</name>
        <dbReference type="ChEBI" id="CHEBI:57792"/>
    </ligand>
</feature>
<feature type="binding site" evidence="1">
    <location>
        <position position="152"/>
    </location>
    <ligand>
        <name>Mn(2+)</name>
        <dbReference type="ChEBI" id="CHEBI:29035"/>
    </ligand>
</feature>
<feature type="binding site" evidence="1">
    <location>
        <position position="180"/>
    </location>
    <ligand>
        <name>1-deoxy-D-xylulose 5-phosphate</name>
        <dbReference type="ChEBI" id="CHEBI:57792"/>
    </ligand>
</feature>
<feature type="binding site" evidence="1">
    <location>
        <position position="203"/>
    </location>
    <ligand>
        <name>1-deoxy-D-xylulose 5-phosphate</name>
        <dbReference type="ChEBI" id="CHEBI:57792"/>
    </ligand>
</feature>
<feature type="binding site" evidence="1">
    <location>
        <position position="209"/>
    </location>
    <ligand>
        <name>NADPH</name>
        <dbReference type="ChEBI" id="CHEBI:57783"/>
    </ligand>
</feature>
<feature type="binding site" evidence="1">
    <location>
        <position position="216"/>
    </location>
    <ligand>
        <name>1-deoxy-D-xylulose 5-phosphate</name>
        <dbReference type="ChEBI" id="CHEBI:57792"/>
    </ligand>
</feature>
<feature type="binding site" evidence="1">
    <location>
        <position position="221"/>
    </location>
    <ligand>
        <name>1-deoxy-D-xylulose 5-phosphate</name>
        <dbReference type="ChEBI" id="CHEBI:57792"/>
    </ligand>
</feature>
<feature type="binding site" evidence="1">
    <location>
        <position position="222"/>
    </location>
    <ligand>
        <name>1-deoxy-D-xylulose 5-phosphate</name>
        <dbReference type="ChEBI" id="CHEBI:57792"/>
    </ligand>
</feature>
<feature type="binding site" evidence="1">
    <location>
        <position position="225"/>
    </location>
    <ligand>
        <name>1-deoxy-D-xylulose 5-phosphate</name>
        <dbReference type="ChEBI" id="CHEBI:57792"/>
    </ligand>
</feature>
<feature type="binding site" evidence="1">
    <location>
        <position position="225"/>
    </location>
    <ligand>
        <name>Mn(2+)</name>
        <dbReference type="ChEBI" id="CHEBI:29035"/>
    </ligand>
</feature>
<organism>
    <name type="scientific">Saccharophagus degradans (strain 2-40 / ATCC 43961 / DSM 17024)</name>
    <dbReference type="NCBI Taxonomy" id="203122"/>
    <lineage>
        <taxon>Bacteria</taxon>
        <taxon>Pseudomonadati</taxon>
        <taxon>Pseudomonadota</taxon>
        <taxon>Gammaproteobacteria</taxon>
        <taxon>Cellvibrionales</taxon>
        <taxon>Cellvibrionaceae</taxon>
        <taxon>Saccharophagus</taxon>
    </lineage>
</organism>
<reference key="1">
    <citation type="journal article" date="2008" name="PLoS Genet.">
        <title>Complete genome sequence of the complex carbohydrate-degrading marine bacterium, Saccharophagus degradans strain 2-40 T.</title>
        <authorList>
            <person name="Weiner R.M."/>
            <person name="Taylor L.E. II"/>
            <person name="Henrissat B."/>
            <person name="Hauser L."/>
            <person name="Land M."/>
            <person name="Coutinho P.M."/>
            <person name="Rancurel C."/>
            <person name="Saunders E.H."/>
            <person name="Longmire A.G."/>
            <person name="Zhang H."/>
            <person name="Bayer E.A."/>
            <person name="Gilbert H.J."/>
            <person name="Larimer F."/>
            <person name="Zhulin I.B."/>
            <person name="Ekborg N.A."/>
            <person name="Lamed R."/>
            <person name="Richardson P.M."/>
            <person name="Borovok I."/>
            <person name="Hutcheson S."/>
        </authorList>
    </citation>
    <scope>NUCLEOTIDE SEQUENCE [LARGE SCALE GENOMIC DNA]</scope>
    <source>
        <strain>2-40 / ATCC 43961 / DSM 17024</strain>
    </source>
</reference>
<keyword id="KW-0414">Isoprene biosynthesis</keyword>
<keyword id="KW-0464">Manganese</keyword>
<keyword id="KW-0479">Metal-binding</keyword>
<keyword id="KW-0521">NADP</keyword>
<keyword id="KW-0560">Oxidoreductase</keyword>
<keyword id="KW-1185">Reference proteome</keyword>
<comment type="function">
    <text evidence="1">Catalyzes the NADPH-dependent rearrangement and reduction of 1-deoxy-D-xylulose-5-phosphate (DXP) to 2-C-methyl-D-erythritol 4-phosphate (MEP).</text>
</comment>
<comment type="catalytic activity">
    <reaction evidence="1">
        <text>2-C-methyl-D-erythritol 4-phosphate + NADP(+) = 1-deoxy-D-xylulose 5-phosphate + NADPH + H(+)</text>
        <dbReference type="Rhea" id="RHEA:13717"/>
        <dbReference type="ChEBI" id="CHEBI:15378"/>
        <dbReference type="ChEBI" id="CHEBI:57783"/>
        <dbReference type="ChEBI" id="CHEBI:57792"/>
        <dbReference type="ChEBI" id="CHEBI:58262"/>
        <dbReference type="ChEBI" id="CHEBI:58349"/>
        <dbReference type="EC" id="1.1.1.267"/>
    </reaction>
    <physiologicalReaction direction="right-to-left" evidence="1">
        <dbReference type="Rhea" id="RHEA:13719"/>
    </physiologicalReaction>
</comment>
<comment type="cofactor">
    <cofactor evidence="1">
        <name>Mg(2+)</name>
        <dbReference type="ChEBI" id="CHEBI:18420"/>
    </cofactor>
    <cofactor evidence="1">
        <name>Mn(2+)</name>
        <dbReference type="ChEBI" id="CHEBI:29035"/>
    </cofactor>
</comment>
<comment type="pathway">
    <text evidence="1">Isoprenoid biosynthesis; isopentenyl diphosphate biosynthesis via DXP pathway; isopentenyl diphosphate from 1-deoxy-D-xylulose 5-phosphate: step 1/6.</text>
</comment>
<comment type="similarity">
    <text evidence="1">Belongs to the DXR family.</text>
</comment>
<name>DXR_SACD2</name>
<sequence length="392" mass="41855">MQQICVLGSTGSIGISTLDVLASHPDKFSVYALTANSSIDLLVEQCLKFSPQYAVIRDEALYLPLKQRIESLNCTTEVLAGEQALCDVASAVQVDSVMAAIVGAAGLAPTLAAVEAGKRVLLANKESLVMSGKLFMQAAKAASALVLPIDSEHNAIFQCLPQPYTSLADAGVQKILLTGSGGPFRDTPLADLSAKTPDQACAHPNWSMGRKISVDSATMMNKGLEFIEACWLFDATPEQIEIVVHPQSIIHSMVQYVDGSVLAQMGNPDMRTPIAHCLDWPRRIDSGVASLDFFALQGLDFCRPDYQRFPALALATSAIKSGGTYPVALNAANEVAVALFLEEKIKFTDIAAIIAAVLEDWETCEPDTIAAVKEADAIARKLAYSVAAKFGY</sequence>
<protein>
    <recommendedName>
        <fullName evidence="1">1-deoxy-D-xylulose 5-phosphate reductoisomerase</fullName>
        <shortName evidence="1">DXP reductoisomerase</shortName>
        <ecNumber evidence="1">1.1.1.267</ecNumber>
    </recommendedName>
    <alternativeName>
        <fullName evidence="1">1-deoxyxylulose-5-phosphate reductoisomerase</fullName>
    </alternativeName>
    <alternativeName>
        <fullName evidence="1">2-C-methyl-D-erythritol 4-phosphate synthase</fullName>
    </alternativeName>
</protein>
<evidence type="ECO:0000255" key="1">
    <source>
        <dbReference type="HAMAP-Rule" id="MF_00183"/>
    </source>
</evidence>
<proteinExistence type="inferred from homology"/>
<dbReference type="EC" id="1.1.1.267" evidence="1"/>
<dbReference type="EMBL" id="CP000282">
    <property type="protein sequence ID" value="ABD81851.1"/>
    <property type="molecule type" value="Genomic_DNA"/>
</dbReference>
<dbReference type="RefSeq" id="WP_011469068.1">
    <property type="nucleotide sequence ID" value="NC_007912.1"/>
</dbReference>
<dbReference type="SMR" id="Q21HH8"/>
<dbReference type="STRING" id="203122.Sde_2591"/>
<dbReference type="GeneID" id="98614254"/>
<dbReference type="KEGG" id="sde:Sde_2591"/>
<dbReference type="eggNOG" id="COG0743">
    <property type="taxonomic scope" value="Bacteria"/>
</dbReference>
<dbReference type="HOGENOM" id="CLU_035714_4_0_6"/>
<dbReference type="OrthoDB" id="9806546at2"/>
<dbReference type="UniPathway" id="UPA00056">
    <property type="reaction ID" value="UER00092"/>
</dbReference>
<dbReference type="Proteomes" id="UP000001947">
    <property type="component" value="Chromosome"/>
</dbReference>
<dbReference type="GO" id="GO:0030604">
    <property type="term" value="F:1-deoxy-D-xylulose-5-phosphate reductoisomerase activity"/>
    <property type="evidence" value="ECO:0007669"/>
    <property type="project" value="UniProtKB-UniRule"/>
</dbReference>
<dbReference type="GO" id="GO:0030145">
    <property type="term" value="F:manganese ion binding"/>
    <property type="evidence" value="ECO:0007669"/>
    <property type="project" value="TreeGrafter"/>
</dbReference>
<dbReference type="GO" id="GO:0070402">
    <property type="term" value="F:NADPH binding"/>
    <property type="evidence" value="ECO:0007669"/>
    <property type="project" value="InterPro"/>
</dbReference>
<dbReference type="GO" id="GO:0051484">
    <property type="term" value="P:isopentenyl diphosphate biosynthetic process, methylerythritol 4-phosphate pathway involved in terpenoid biosynthetic process"/>
    <property type="evidence" value="ECO:0007669"/>
    <property type="project" value="TreeGrafter"/>
</dbReference>
<dbReference type="FunFam" id="3.40.50.720:FF:000045">
    <property type="entry name" value="1-deoxy-D-xylulose 5-phosphate reductoisomerase"/>
    <property type="match status" value="1"/>
</dbReference>
<dbReference type="Gene3D" id="1.10.1740.10">
    <property type="match status" value="1"/>
</dbReference>
<dbReference type="Gene3D" id="3.40.50.720">
    <property type="entry name" value="NAD(P)-binding Rossmann-like Domain"/>
    <property type="match status" value="1"/>
</dbReference>
<dbReference type="HAMAP" id="MF_00183">
    <property type="entry name" value="DXP_reductoisom"/>
    <property type="match status" value="1"/>
</dbReference>
<dbReference type="InterPro" id="IPR003821">
    <property type="entry name" value="DXP_reductoisomerase"/>
</dbReference>
<dbReference type="InterPro" id="IPR013644">
    <property type="entry name" value="DXP_reductoisomerase_C"/>
</dbReference>
<dbReference type="InterPro" id="IPR013512">
    <property type="entry name" value="DXP_reductoisomerase_N"/>
</dbReference>
<dbReference type="InterPro" id="IPR026877">
    <property type="entry name" value="DXPR_C"/>
</dbReference>
<dbReference type="InterPro" id="IPR036169">
    <property type="entry name" value="DXPR_C_sf"/>
</dbReference>
<dbReference type="InterPro" id="IPR036291">
    <property type="entry name" value="NAD(P)-bd_dom_sf"/>
</dbReference>
<dbReference type="NCBIfam" id="TIGR00243">
    <property type="entry name" value="Dxr"/>
    <property type="match status" value="1"/>
</dbReference>
<dbReference type="NCBIfam" id="NF003938">
    <property type="entry name" value="PRK05447.1-1"/>
    <property type="match status" value="1"/>
</dbReference>
<dbReference type="NCBIfam" id="NF009114">
    <property type="entry name" value="PRK12464.1"/>
    <property type="match status" value="1"/>
</dbReference>
<dbReference type="PANTHER" id="PTHR30525">
    <property type="entry name" value="1-DEOXY-D-XYLULOSE 5-PHOSPHATE REDUCTOISOMERASE"/>
    <property type="match status" value="1"/>
</dbReference>
<dbReference type="PANTHER" id="PTHR30525:SF0">
    <property type="entry name" value="1-DEOXY-D-XYLULOSE 5-PHOSPHATE REDUCTOISOMERASE, CHLOROPLASTIC"/>
    <property type="match status" value="1"/>
</dbReference>
<dbReference type="Pfam" id="PF08436">
    <property type="entry name" value="DXP_redisom_C"/>
    <property type="match status" value="1"/>
</dbReference>
<dbReference type="Pfam" id="PF02670">
    <property type="entry name" value="DXP_reductoisom"/>
    <property type="match status" value="1"/>
</dbReference>
<dbReference type="Pfam" id="PF13288">
    <property type="entry name" value="DXPR_C"/>
    <property type="match status" value="1"/>
</dbReference>
<dbReference type="PIRSF" id="PIRSF006205">
    <property type="entry name" value="Dxp_reductismrs"/>
    <property type="match status" value="1"/>
</dbReference>
<dbReference type="SUPFAM" id="SSF69055">
    <property type="entry name" value="1-deoxy-D-xylulose-5-phosphate reductoisomerase, C-terminal domain"/>
    <property type="match status" value="1"/>
</dbReference>
<dbReference type="SUPFAM" id="SSF55347">
    <property type="entry name" value="Glyceraldehyde-3-phosphate dehydrogenase-like, C-terminal domain"/>
    <property type="match status" value="1"/>
</dbReference>
<dbReference type="SUPFAM" id="SSF51735">
    <property type="entry name" value="NAD(P)-binding Rossmann-fold domains"/>
    <property type="match status" value="1"/>
</dbReference>
<accession>Q21HH8</accession>
<gene>
    <name evidence="1" type="primary">dxr</name>
    <name type="ordered locus">Sde_2591</name>
</gene>